<sequence length="500" mass="56124">MSDFYWLTIIVVLPISAGSLIALLPHRGNKVVRWYTICICLFELLLTTYVFCYHFKLDDPLIQLEEDFNWINLFDFHWRLGIDGLSIGPILLTGFITTLATSAAWPVTRNSRLFHFLMLAMYSGQIGSFSSRDLLLFFIMWELELIPVYLLLSMWGGKKRLYSATKFILYTAGGSIFLLMGVLGMGLYGSNEPTLNFETLANQSYPVALEIIFYFGFLIAYAVKSPIIPLHTWLPDTHGEAHYSTCMLLAGILLKMGAYGLVRVNMELLPHAHSIFSPWLMIVGTIQIIYAALTSPGQRNLKKRIAYSSVSHMGFIIIGISSITDAGLNGAILQIISHGFIGAALFFLAGTSYDRIRLRYLNEMGGIAILMPRIFTMFSSFSMASLALPGMSGFVAEFVIFLGIITSPKYLVMSKILITFVMAIGMILTPIYSLSMSRQMFYGYRLFNVPKSHFVDSGPREIFIFMCILLPIIGIGIYPDFVLSLSVDKVETILSNYFHG</sequence>
<protein>
    <recommendedName>
        <fullName evidence="1">NAD(P)H-quinone oxidoreductase chain 4, chloroplastic</fullName>
        <ecNumber evidence="1">7.1.1.-</ecNumber>
    </recommendedName>
    <alternativeName>
        <fullName evidence="1">NAD(P)H dehydrogenase, chain 4</fullName>
    </alternativeName>
    <alternativeName>
        <fullName evidence="1">NADH-plastoquinone oxidoreductase chain 4</fullName>
    </alternativeName>
</protein>
<evidence type="ECO:0000255" key="1">
    <source>
        <dbReference type="HAMAP-Rule" id="MF_00491"/>
    </source>
</evidence>
<dbReference type="EC" id="7.1.1.-" evidence="1"/>
<dbReference type="EMBL" id="AJ627251">
    <property type="protein sequence ID" value="CAF28646.1"/>
    <property type="molecule type" value="Genomic_DNA"/>
</dbReference>
<dbReference type="RefSeq" id="YP_053206.1">
    <property type="nucleotide sequence ID" value="NC_006050.1"/>
</dbReference>
<dbReference type="SMR" id="Q6EW00"/>
<dbReference type="GeneID" id="2896130"/>
<dbReference type="GO" id="GO:0009535">
    <property type="term" value="C:chloroplast thylakoid membrane"/>
    <property type="evidence" value="ECO:0007669"/>
    <property type="project" value="UniProtKB-SubCell"/>
</dbReference>
<dbReference type="GO" id="GO:0008137">
    <property type="term" value="F:NADH dehydrogenase (ubiquinone) activity"/>
    <property type="evidence" value="ECO:0007669"/>
    <property type="project" value="InterPro"/>
</dbReference>
<dbReference type="GO" id="GO:0048039">
    <property type="term" value="F:ubiquinone binding"/>
    <property type="evidence" value="ECO:0007669"/>
    <property type="project" value="TreeGrafter"/>
</dbReference>
<dbReference type="GO" id="GO:0042773">
    <property type="term" value="P:ATP synthesis coupled electron transport"/>
    <property type="evidence" value="ECO:0007669"/>
    <property type="project" value="InterPro"/>
</dbReference>
<dbReference type="GO" id="GO:0015990">
    <property type="term" value="P:electron transport coupled proton transport"/>
    <property type="evidence" value="ECO:0007669"/>
    <property type="project" value="TreeGrafter"/>
</dbReference>
<dbReference type="HAMAP" id="MF_00491">
    <property type="entry name" value="NDH1_NuoM"/>
    <property type="match status" value="1"/>
</dbReference>
<dbReference type="InterPro" id="IPR022997">
    <property type="entry name" value="NADH_Q_OxRdtase_chain4"/>
</dbReference>
<dbReference type="InterPro" id="IPR010227">
    <property type="entry name" value="NADH_Q_OxRdtase_chainM/4"/>
</dbReference>
<dbReference type="InterPro" id="IPR003918">
    <property type="entry name" value="NADH_UbQ_OxRdtase"/>
</dbReference>
<dbReference type="InterPro" id="IPR001750">
    <property type="entry name" value="ND/Mrp_TM"/>
</dbReference>
<dbReference type="NCBIfam" id="TIGR01972">
    <property type="entry name" value="NDH_I_M"/>
    <property type="match status" value="1"/>
</dbReference>
<dbReference type="PANTHER" id="PTHR43507:SF21">
    <property type="entry name" value="NAD(P)H-QUINONE OXIDOREDUCTASE CHAIN 4, CHLOROPLASTIC"/>
    <property type="match status" value="1"/>
</dbReference>
<dbReference type="PANTHER" id="PTHR43507">
    <property type="entry name" value="NADH-UBIQUINONE OXIDOREDUCTASE CHAIN 4"/>
    <property type="match status" value="1"/>
</dbReference>
<dbReference type="Pfam" id="PF00361">
    <property type="entry name" value="Proton_antipo_M"/>
    <property type="match status" value="1"/>
</dbReference>
<dbReference type="PRINTS" id="PR01437">
    <property type="entry name" value="NUOXDRDTASE4"/>
</dbReference>
<name>NU4C_NYMAL</name>
<feature type="chain" id="PRO_0000118021" description="NAD(P)H-quinone oxidoreductase chain 4, chloroplastic">
    <location>
        <begin position="1"/>
        <end position="500"/>
    </location>
</feature>
<feature type="transmembrane region" description="Helical" evidence="1">
    <location>
        <begin position="4"/>
        <end position="24"/>
    </location>
</feature>
<feature type="transmembrane region" description="Helical" evidence="1">
    <location>
        <begin position="35"/>
        <end position="55"/>
    </location>
</feature>
<feature type="transmembrane region" description="Helical" evidence="1">
    <location>
        <begin position="80"/>
        <end position="100"/>
    </location>
</feature>
<feature type="transmembrane region" description="Helical" evidence="1">
    <location>
        <begin position="113"/>
        <end position="130"/>
    </location>
</feature>
<feature type="transmembrane region" description="Helical" evidence="1">
    <location>
        <begin position="134"/>
        <end position="154"/>
    </location>
</feature>
<feature type="transmembrane region" description="Helical" evidence="1">
    <location>
        <begin position="167"/>
        <end position="187"/>
    </location>
</feature>
<feature type="transmembrane region" description="Helical" evidence="1">
    <location>
        <begin position="208"/>
        <end position="228"/>
    </location>
</feature>
<feature type="transmembrane region" description="Helical" evidence="1">
    <location>
        <begin position="242"/>
        <end position="262"/>
    </location>
</feature>
<feature type="transmembrane region" description="Helical" evidence="1">
    <location>
        <begin position="274"/>
        <end position="294"/>
    </location>
</feature>
<feature type="transmembrane region" description="Helical" evidence="1">
    <location>
        <begin position="305"/>
        <end position="325"/>
    </location>
</feature>
<feature type="transmembrane region" description="Helical" evidence="1">
    <location>
        <begin position="330"/>
        <end position="350"/>
    </location>
</feature>
<feature type="transmembrane region" description="Helical" evidence="1">
    <location>
        <begin position="364"/>
        <end position="384"/>
    </location>
</feature>
<feature type="transmembrane region" description="Helical" evidence="1">
    <location>
        <begin position="386"/>
        <end position="406"/>
    </location>
</feature>
<feature type="transmembrane region" description="Helical" evidence="1">
    <location>
        <begin position="416"/>
        <end position="436"/>
    </location>
</feature>
<feature type="transmembrane region" description="Helical" evidence="1">
    <location>
        <begin position="462"/>
        <end position="482"/>
    </location>
</feature>
<geneLocation type="chloroplast"/>
<comment type="catalytic activity">
    <reaction evidence="1">
        <text>a plastoquinone + NADH + (n+1) H(+)(in) = a plastoquinol + NAD(+) + n H(+)(out)</text>
        <dbReference type="Rhea" id="RHEA:42608"/>
        <dbReference type="Rhea" id="RHEA-COMP:9561"/>
        <dbReference type="Rhea" id="RHEA-COMP:9562"/>
        <dbReference type="ChEBI" id="CHEBI:15378"/>
        <dbReference type="ChEBI" id="CHEBI:17757"/>
        <dbReference type="ChEBI" id="CHEBI:57540"/>
        <dbReference type="ChEBI" id="CHEBI:57945"/>
        <dbReference type="ChEBI" id="CHEBI:62192"/>
    </reaction>
</comment>
<comment type="catalytic activity">
    <reaction evidence="1">
        <text>a plastoquinone + NADPH + (n+1) H(+)(in) = a plastoquinol + NADP(+) + n H(+)(out)</text>
        <dbReference type="Rhea" id="RHEA:42612"/>
        <dbReference type="Rhea" id="RHEA-COMP:9561"/>
        <dbReference type="Rhea" id="RHEA-COMP:9562"/>
        <dbReference type="ChEBI" id="CHEBI:15378"/>
        <dbReference type="ChEBI" id="CHEBI:17757"/>
        <dbReference type="ChEBI" id="CHEBI:57783"/>
        <dbReference type="ChEBI" id="CHEBI:58349"/>
        <dbReference type="ChEBI" id="CHEBI:62192"/>
    </reaction>
</comment>
<comment type="subcellular location">
    <subcellularLocation>
        <location evidence="1">Plastid</location>
        <location evidence="1">Chloroplast thylakoid membrane</location>
        <topology evidence="1">Multi-pass membrane protein</topology>
    </subcellularLocation>
</comment>
<comment type="similarity">
    <text evidence="1">Belongs to the complex I subunit 4 family.</text>
</comment>
<accession>Q6EW00</accession>
<gene>
    <name evidence="1" type="primary">ndhD</name>
</gene>
<organism>
    <name type="scientific">Nymphaea alba</name>
    <name type="common">White water-lily</name>
    <name type="synonym">Castalia alba</name>
    <dbReference type="NCBI Taxonomy" id="34301"/>
    <lineage>
        <taxon>Eukaryota</taxon>
        <taxon>Viridiplantae</taxon>
        <taxon>Streptophyta</taxon>
        <taxon>Embryophyta</taxon>
        <taxon>Tracheophyta</taxon>
        <taxon>Spermatophyta</taxon>
        <taxon>Magnoliopsida</taxon>
        <taxon>Nymphaeales</taxon>
        <taxon>Nymphaeaceae</taxon>
        <taxon>Nymphaea</taxon>
    </lineage>
</organism>
<proteinExistence type="inferred from homology"/>
<keyword id="KW-0150">Chloroplast</keyword>
<keyword id="KW-0472">Membrane</keyword>
<keyword id="KW-0520">NAD</keyword>
<keyword id="KW-0521">NADP</keyword>
<keyword id="KW-0934">Plastid</keyword>
<keyword id="KW-0618">Plastoquinone</keyword>
<keyword id="KW-0874">Quinone</keyword>
<keyword id="KW-0793">Thylakoid</keyword>
<keyword id="KW-1278">Translocase</keyword>
<keyword id="KW-0812">Transmembrane</keyword>
<keyword id="KW-1133">Transmembrane helix</keyword>
<reference key="1">
    <citation type="journal article" date="2004" name="Mol. Biol. Evol.">
        <title>The chloroplast genome of Nymphaea alba: whole-genome analyses and the problem of identifying the most basal angiosperm.</title>
        <authorList>
            <person name="Goremykin V.V."/>
            <person name="Hirsch-Ernst K.I."/>
            <person name="Woelfl S."/>
            <person name="Hellwig F.H."/>
        </authorList>
    </citation>
    <scope>NUCLEOTIDE SEQUENCE [LARGE SCALE GENOMIC DNA]</scope>
</reference>